<name>FXY11_DANRE</name>
<accession>C0HJJ0</accession>
<reference evidence="5" key="1">
    <citation type="journal article" date="2010" name="Front. Physiol.">
        <title>Identification of zebrafish Fxyd11a protein that is highly expressed in ion-transporting epithelium of the gill and skin and its possible role in ion homeostasis.</title>
        <authorList>
            <person name="Saito K."/>
            <person name="Nakamura N."/>
            <person name="Ito Y."/>
            <person name="Hoshijima K."/>
            <person name="Esaki M."/>
            <person name="Zhao B."/>
            <person name="Hirose S."/>
        </authorList>
    </citation>
    <scope>NUCLEOTIDE SEQUENCE [MRNA] (ISOFORMS 1 AND 2)</scope>
    <scope>FUNCTION</scope>
    <scope>SUBCELLULAR LOCATION</scope>
    <scope>TISSUE SPECIFICITY</scope>
    <scope>DEVELOPMENTAL STAGE</scope>
    <scope>INDUCTION</scope>
    <scope>DISRUPTION PHENOTYPE</scope>
</reference>
<reference evidence="5" key="2">
    <citation type="journal article" date="2013" name="Nature">
        <title>The zebrafish reference genome sequence and its relationship to the human genome.</title>
        <authorList>
            <person name="Howe K."/>
            <person name="Clark M.D."/>
            <person name="Torroja C.F."/>
            <person name="Torrance J."/>
            <person name="Berthelot C."/>
            <person name="Muffato M."/>
            <person name="Collins J.E."/>
            <person name="Humphray S."/>
            <person name="McLaren K."/>
            <person name="Matthews L."/>
            <person name="McLaren S."/>
            <person name="Sealy I."/>
            <person name="Caccamo M."/>
            <person name="Churcher C."/>
            <person name="Scott C."/>
            <person name="Barrett J.C."/>
            <person name="Koch R."/>
            <person name="Rauch G.J."/>
            <person name="White S."/>
            <person name="Chow W."/>
            <person name="Kilian B."/>
            <person name="Quintais L.T."/>
            <person name="Guerra-Assuncao J.A."/>
            <person name="Zhou Y."/>
            <person name="Gu Y."/>
            <person name="Yen J."/>
            <person name="Vogel J.H."/>
            <person name="Eyre T."/>
            <person name="Redmond S."/>
            <person name="Banerjee R."/>
            <person name="Chi J."/>
            <person name="Fu B."/>
            <person name="Langley E."/>
            <person name="Maguire S.F."/>
            <person name="Laird G.K."/>
            <person name="Lloyd D."/>
            <person name="Kenyon E."/>
            <person name="Donaldson S."/>
            <person name="Sehra H."/>
            <person name="Almeida-King J."/>
            <person name="Loveland J."/>
            <person name="Trevanion S."/>
            <person name="Jones M."/>
            <person name="Quail M."/>
            <person name="Willey D."/>
            <person name="Hunt A."/>
            <person name="Burton J."/>
            <person name="Sims S."/>
            <person name="McLay K."/>
            <person name="Plumb B."/>
            <person name="Davis J."/>
            <person name="Clee C."/>
            <person name="Oliver K."/>
            <person name="Clark R."/>
            <person name="Riddle C."/>
            <person name="Elliot D."/>
            <person name="Threadgold G."/>
            <person name="Harden G."/>
            <person name="Ware D."/>
            <person name="Begum S."/>
            <person name="Mortimore B."/>
            <person name="Kerry G."/>
            <person name="Heath P."/>
            <person name="Phillimore B."/>
            <person name="Tracey A."/>
            <person name="Corby N."/>
            <person name="Dunn M."/>
            <person name="Johnson C."/>
            <person name="Wood J."/>
            <person name="Clark S."/>
            <person name="Pelan S."/>
            <person name="Griffiths G."/>
            <person name="Smith M."/>
            <person name="Glithero R."/>
            <person name="Howden P."/>
            <person name="Barker N."/>
            <person name="Lloyd C."/>
            <person name="Stevens C."/>
            <person name="Harley J."/>
            <person name="Holt K."/>
            <person name="Panagiotidis G."/>
            <person name="Lovell J."/>
            <person name="Beasley H."/>
            <person name="Henderson C."/>
            <person name="Gordon D."/>
            <person name="Auger K."/>
            <person name="Wright D."/>
            <person name="Collins J."/>
            <person name="Raisen C."/>
            <person name="Dyer L."/>
            <person name="Leung K."/>
            <person name="Robertson L."/>
            <person name="Ambridge K."/>
            <person name="Leongamornlert D."/>
            <person name="McGuire S."/>
            <person name="Gilderthorp R."/>
            <person name="Griffiths C."/>
            <person name="Manthravadi D."/>
            <person name="Nichol S."/>
            <person name="Barker G."/>
            <person name="Whitehead S."/>
            <person name="Kay M."/>
            <person name="Brown J."/>
            <person name="Murnane C."/>
            <person name="Gray E."/>
            <person name="Humphries M."/>
            <person name="Sycamore N."/>
            <person name="Barker D."/>
            <person name="Saunders D."/>
            <person name="Wallis J."/>
            <person name="Babbage A."/>
            <person name="Hammond S."/>
            <person name="Mashreghi-Mohammadi M."/>
            <person name="Barr L."/>
            <person name="Martin S."/>
            <person name="Wray P."/>
            <person name="Ellington A."/>
            <person name="Matthews N."/>
            <person name="Ellwood M."/>
            <person name="Woodmansey R."/>
            <person name="Clark G."/>
            <person name="Cooper J."/>
            <person name="Tromans A."/>
            <person name="Grafham D."/>
            <person name="Skuce C."/>
            <person name="Pandian R."/>
            <person name="Andrews R."/>
            <person name="Harrison E."/>
            <person name="Kimberley A."/>
            <person name="Garnett J."/>
            <person name="Fosker N."/>
            <person name="Hall R."/>
            <person name="Garner P."/>
            <person name="Kelly D."/>
            <person name="Bird C."/>
            <person name="Palmer S."/>
            <person name="Gehring I."/>
            <person name="Berger A."/>
            <person name="Dooley C.M."/>
            <person name="Ersan-Urun Z."/>
            <person name="Eser C."/>
            <person name="Geiger H."/>
            <person name="Geisler M."/>
            <person name="Karotki L."/>
            <person name="Kirn A."/>
            <person name="Konantz J."/>
            <person name="Konantz M."/>
            <person name="Oberlander M."/>
            <person name="Rudolph-Geiger S."/>
            <person name="Teucke M."/>
            <person name="Lanz C."/>
            <person name="Raddatz G."/>
            <person name="Osoegawa K."/>
            <person name="Zhu B."/>
            <person name="Rapp A."/>
            <person name="Widaa S."/>
            <person name="Langford C."/>
            <person name="Yang F."/>
            <person name="Schuster S.C."/>
            <person name="Carter N.P."/>
            <person name="Harrow J."/>
            <person name="Ning Z."/>
            <person name="Herrero J."/>
            <person name="Searle S.M."/>
            <person name="Enright A."/>
            <person name="Geisler R."/>
            <person name="Plasterk R.H."/>
            <person name="Lee C."/>
            <person name="Westerfield M."/>
            <person name="de Jong P.J."/>
            <person name="Zon L.I."/>
            <person name="Postlethwait J.H."/>
            <person name="Nusslein-Volhard C."/>
            <person name="Hubbard T.J."/>
            <person name="Roest Crollius H."/>
            <person name="Rogers J."/>
            <person name="Stemple D.L."/>
        </authorList>
    </citation>
    <scope>NUCLEOTIDE SEQUENCE [LARGE SCALE GENOMIC DNA]</scope>
    <source>
        <strain evidence="3">Tuebingen</strain>
    </source>
</reference>
<organism>
    <name type="scientific">Danio rerio</name>
    <name type="common">Zebrafish</name>
    <name type="synonym">Brachydanio rerio</name>
    <dbReference type="NCBI Taxonomy" id="7955"/>
    <lineage>
        <taxon>Eukaryota</taxon>
        <taxon>Metazoa</taxon>
        <taxon>Chordata</taxon>
        <taxon>Craniata</taxon>
        <taxon>Vertebrata</taxon>
        <taxon>Euteleostomi</taxon>
        <taxon>Actinopterygii</taxon>
        <taxon>Neopterygii</taxon>
        <taxon>Teleostei</taxon>
        <taxon>Ostariophysi</taxon>
        <taxon>Cypriniformes</taxon>
        <taxon>Danionidae</taxon>
        <taxon>Danioninae</taxon>
        <taxon>Danio</taxon>
    </lineage>
</organism>
<feature type="signal peptide" evidence="1">
    <location>
        <begin position="1"/>
        <end position="22"/>
    </location>
</feature>
<feature type="chain" id="PRO_0000429377" description="FXYD domain-containing ion transport regulator 11" evidence="1">
    <location>
        <begin position="23"/>
        <end position="69"/>
    </location>
</feature>
<feature type="topological domain" description="Extracellular" evidence="1">
    <location>
        <begin position="23"/>
        <end position="33"/>
    </location>
</feature>
<feature type="transmembrane region" description="Helical" evidence="1">
    <location>
        <begin position="34"/>
        <end position="54"/>
    </location>
</feature>
<feature type="topological domain" description="Cytoplasmic" evidence="1">
    <location>
        <begin position="55"/>
        <end position="69"/>
    </location>
</feature>
<feature type="splice variant" id="VSP_054936" description="In isoform 2." evidence="4">
    <location>
        <begin position="62"/>
        <end position="69"/>
    </location>
</feature>
<proteinExistence type="evidence at protein level"/>
<keyword id="KW-0025">Alternative splicing</keyword>
<keyword id="KW-1003">Cell membrane</keyword>
<keyword id="KW-0406">Ion transport</keyword>
<keyword id="KW-0472">Membrane</keyword>
<keyword id="KW-1185">Reference proteome</keyword>
<keyword id="KW-0732">Signal</keyword>
<keyword id="KW-0812">Transmembrane</keyword>
<keyword id="KW-1133">Transmembrane helix</keyword>
<keyword id="KW-0813">Transport</keyword>
<comment type="function">
    <text evidence="4">May modulate the activity of a sodium/potassium-transporting ATPase.</text>
</comment>
<comment type="subcellular location">
    <subcellularLocation>
        <location evidence="2">Cell membrane</location>
        <topology evidence="2">Single-pass type I membrane protein</topology>
    </subcellularLocation>
</comment>
<comment type="alternative products">
    <event type="alternative splicing"/>
    <isoform>
        <id>C0HJJ0-1</id>
        <name evidence="2">1</name>
        <name evidence="4">a</name>
        <name evidence="4">zFxyd11a</name>
        <sequence type="displayed"/>
    </isoform>
    <isoform>
        <id>C0HJJ0-2</id>
        <name evidence="2">2</name>
        <name evidence="4">b</name>
        <name evidence="4">zFxyd11b</name>
        <sequence type="described" ref="VSP_054936"/>
    </isoform>
</comment>
<comment type="tissue specificity">
    <text evidence="2">Detected in adult gill and in larval skin at 2 days post-fertilization (at protein level). In adult gill, strong expression is found in the basal regions of the secondary lamellae.</text>
</comment>
<comment type="developmental stage">
    <text evidence="2">Expressed from 1 day post-fertilization.</text>
</comment>
<comment type="induction">
    <text evidence="2">Induced in larvae and adult gills by low salinity and repressed by high salinity.</text>
</comment>
<comment type="disruption phenotype">
    <text evidence="2">Morpholino knockdown of the protein results in an increased number of sodium/potassium-transporting ATPase-expressing cells in larval skin.</text>
</comment>
<comment type="similarity">
    <text evidence="1">Belongs to the FXYD family.</text>
</comment>
<sequence>MSQLTELVLLTVFLALFSRAEANPFVYNYEALRIGGLVFTCVLVAGAVTALCWGQCKPKRKHDDDASKI</sequence>
<dbReference type="EMBL" id="FP016247">
    <property type="status" value="NOT_ANNOTATED_CDS"/>
    <property type="molecule type" value="Genomic_DNA"/>
</dbReference>
<dbReference type="RefSeq" id="NP_001268947.1">
    <molecule id="C0HJJ0-1"/>
    <property type="nucleotide sequence ID" value="NM_001282018.1"/>
</dbReference>
<dbReference type="RefSeq" id="NP_001268949.1">
    <molecule id="C0HJJ0-2"/>
    <property type="nucleotide sequence ID" value="NM_001282020.1"/>
</dbReference>
<dbReference type="SMR" id="C0HJJ0"/>
<dbReference type="FunCoup" id="C0HJJ0">
    <property type="interactions" value="1"/>
</dbReference>
<dbReference type="STRING" id="7955.ENSDARP00000137233"/>
<dbReference type="Ensembl" id="ENSDART00000164436">
    <molecule id="C0HJJ0-1"/>
    <property type="protein sequence ID" value="ENSDARP00000137233"/>
    <property type="gene ID" value="ENSDARG00000099117"/>
</dbReference>
<dbReference type="GeneID" id="569335"/>
<dbReference type="KEGG" id="dre:569335"/>
<dbReference type="AGR" id="ZFIN:ZDB-GENE-030131-33"/>
<dbReference type="CTD" id="569335"/>
<dbReference type="ZFIN" id="ZDB-GENE-030131-33">
    <property type="gene designation" value="fxyd11"/>
</dbReference>
<dbReference type="InParanoid" id="C0HJJ0"/>
<dbReference type="OMA" id="YNQCARV"/>
<dbReference type="OrthoDB" id="8430468at2759"/>
<dbReference type="PRO" id="PR:C0HJJ0"/>
<dbReference type="Proteomes" id="UP000000437">
    <property type="component" value="Chromosome 16"/>
</dbReference>
<dbReference type="Bgee" id="ENSDARG00000099117">
    <property type="expression patterns" value="Expressed in pharyngeal gill and 11 other cell types or tissues"/>
</dbReference>
<dbReference type="ExpressionAtlas" id="C0HJJ0">
    <property type="expression patterns" value="baseline and differential"/>
</dbReference>
<dbReference type="GO" id="GO:0016020">
    <property type="term" value="C:membrane"/>
    <property type="evidence" value="ECO:0000314"/>
    <property type="project" value="UniProtKB"/>
</dbReference>
<dbReference type="GO" id="GO:0005886">
    <property type="term" value="C:plasma membrane"/>
    <property type="evidence" value="ECO:0007669"/>
    <property type="project" value="UniProtKB-SubCell"/>
</dbReference>
<dbReference type="GO" id="GO:0017080">
    <property type="term" value="F:sodium channel regulator activity"/>
    <property type="evidence" value="ECO:0000318"/>
    <property type="project" value="GO_Central"/>
</dbReference>
<dbReference type="GO" id="GO:0006811">
    <property type="term" value="P:monoatomic ion transport"/>
    <property type="evidence" value="ECO:0007669"/>
    <property type="project" value="UniProtKB-KW"/>
</dbReference>
<dbReference type="GO" id="GO:1903278">
    <property type="term" value="P:positive regulation of sodium ion export across plasma membrane"/>
    <property type="evidence" value="ECO:0000318"/>
    <property type="project" value="GO_Central"/>
</dbReference>
<dbReference type="CDD" id="cd20329">
    <property type="entry name" value="FXYD11"/>
    <property type="match status" value="1"/>
</dbReference>
<dbReference type="FunFam" id="1.20.5.780:FF:000012">
    <property type="entry name" value="FXYD domain-containing ion transport regulator"/>
    <property type="match status" value="1"/>
</dbReference>
<dbReference type="Gene3D" id="1.20.5.780">
    <property type="entry name" value="Single helix bin"/>
    <property type="match status" value="1"/>
</dbReference>
<dbReference type="InterPro" id="IPR000272">
    <property type="entry name" value="Ion-transport_regulator_FXYD"/>
</dbReference>
<dbReference type="Pfam" id="PF02038">
    <property type="entry name" value="ATP1G1_PLM_MAT8"/>
    <property type="match status" value="1"/>
</dbReference>
<evidence type="ECO:0000255" key="1"/>
<evidence type="ECO:0000269" key="2">
    <source>
    </source>
</evidence>
<evidence type="ECO:0000269" key="3">
    <source>
    </source>
</evidence>
<evidence type="ECO:0000303" key="4">
    <source>
    </source>
</evidence>
<evidence type="ECO:0000305" key="5"/>
<gene>
    <name evidence="4" type="primary">fxyd11</name>
</gene>
<protein>
    <recommendedName>
        <fullName evidence="4">FXYD domain-containing ion transport regulator 11</fullName>
    </recommendedName>
</protein>